<organism>
    <name type="scientific">Pachygrapsus marmoratus</name>
    <name type="common">Marbled rock crab</name>
    <name type="synonym">Cancer marmoratus</name>
    <dbReference type="NCBI Taxonomy" id="135190"/>
    <lineage>
        <taxon>Eukaryota</taxon>
        <taxon>Metazoa</taxon>
        <taxon>Ecdysozoa</taxon>
        <taxon>Arthropoda</taxon>
        <taxon>Crustacea</taxon>
        <taxon>Multicrustacea</taxon>
        <taxon>Malacostraca</taxon>
        <taxon>Eumalacostraca</taxon>
        <taxon>Eucarida</taxon>
        <taxon>Decapoda</taxon>
        <taxon>Pleocyemata</taxon>
        <taxon>Brachyura</taxon>
        <taxon>Eubrachyura</taxon>
        <taxon>Grapsoidea</taxon>
        <taxon>Grapsidae</taxon>
        <taxon>Pachygrapsus</taxon>
    </lineage>
</organism>
<name>KARG_PACMR</name>
<accession>Q9GYX1</accession>
<comment type="catalytic activity">
    <reaction>
        <text>L-arginine + ATP = N(omega)-phospho-L-arginine + ADP + H(+)</text>
        <dbReference type="Rhea" id="RHEA:22940"/>
        <dbReference type="ChEBI" id="CHEBI:15378"/>
        <dbReference type="ChEBI" id="CHEBI:30616"/>
        <dbReference type="ChEBI" id="CHEBI:32682"/>
        <dbReference type="ChEBI" id="CHEBI:58477"/>
        <dbReference type="ChEBI" id="CHEBI:456216"/>
        <dbReference type="EC" id="2.7.3.3"/>
    </reaction>
</comment>
<comment type="similarity">
    <text evidence="3 4">Belongs to the ATP:guanido phosphotransferase family.</text>
</comment>
<reference key="1">
    <citation type="submission" date="2000-07" db="EMBL/GenBank/DDBJ databases">
        <title>Sequence analysis and expression of arginine kinase mRNA in gills of the semi-terrestrial grapsid crab Pachygrapsus marmoratus.</title>
        <authorList>
            <person name="Weihrauch D."/>
            <person name="Spanings-Pierrot C."/>
            <person name="Towle D.W."/>
        </authorList>
    </citation>
    <scope>NUCLEOTIDE SEQUENCE [MRNA]</scope>
    <source>
        <tissue>Gill</tissue>
    </source>
</reference>
<dbReference type="EC" id="2.7.3.3"/>
<dbReference type="EMBL" id="AF288785">
    <property type="protein sequence ID" value="AAG01175.1"/>
    <property type="molecule type" value="mRNA"/>
</dbReference>
<dbReference type="SMR" id="Q9GYX1"/>
<dbReference type="BRENDA" id="2.7.3.3">
    <property type="organism ID" value="10206"/>
</dbReference>
<dbReference type="GO" id="GO:0005615">
    <property type="term" value="C:extracellular space"/>
    <property type="evidence" value="ECO:0007669"/>
    <property type="project" value="TreeGrafter"/>
</dbReference>
<dbReference type="GO" id="GO:0004054">
    <property type="term" value="F:arginine kinase activity"/>
    <property type="evidence" value="ECO:0000250"/>
    <property type="project" value="UniProtKB"/>
</dbReference>
<dbReference type="GO" id="GO:0005524">
    <property type="term" value="F:ATP binding"/>
    <property type="evidence" value="ECO:0007669"/>
    <property type="project" value="UniProtKB-KW"/>
</dbReference>
<dbReference type="GO" id="GO:0004111">
    <property type="term" value="F:creatine kinase activity"/>
    <property type="evidence" value="ECO:0007669"/>
    <property type="project" value="InterPro"/>
</dbReference>
<dbReference type="GO" id="GO:0046314">
    <property type="term" value="P:phosphocreatine biosynthetic process"/>
    <property type="evidence" value="ECO:0007669"/>
    <property type="project" value="InterPro"/>
</dbReference>
<dbReference type="CDD" id="cd07932">
    <property type="entry name" value="arginine_kinase_like"/>
    <property type="match status" value="1"/>
</dbReference>
<dbReference type="FunFam" id="3.30.590.10:FF:000006">
    <property type="entry name" value="Arginine kinase 1"/>
    <property type="match status" value="1"/>
</dbReference>
<dbReference type="FunFam" id="1.10.135.10:FF:000003">
    <property type="entry name" value="Three-domain arginine kinase"/>
    <property type="match status" value="1"/>
</dbReference>
<dbReference type="Gene3D" id="1.10.135.10">
    <property type="entry name" value="ATP:guanido phosphotransferase, N-terminal domain"/>
    <property type="match status" value="1"/>
</dbReference>
<dbReference type="Gene3D" id="3.30.590.10">
    <property type="entry name" value="Glutamine synthetase/guanido kinase, catalytic domain"/>
    <property type="match status" value="1"/>
</dbReference>
<dbReference type="InterPro" id="IPR000749">
    <property type="entry name" value="ATP-guanido_PTrfase"/>
</dbReference>
<dbReference type="InterPro" id="IPR022415">
    <property type="entry name" value="ATP-guanido_PTrfase_AS"/>
</dbReference>
<dbReference type="InterPro" id="IPR022414">
    <property type="entry name" value="ATP-guanido_PTrfase_cat"/>
</dbReference>
<dbReference type="InterPro" id="IPR022413">
    <property type="entry name" value="ATP-guanido_PTrfase_N"/>
</dbReference>
<dbReference type="InterPro" id="IPR036802">
    <property type="entry name" value="ATP-guanido_PTrfase_N_sf"/>
</dbReference>
<dbReference type="InterPro" id="IPR014746">
    <property type="entry name" value="Gln_synth/guanido_kin_cat_dom"/>
</dbReference>
<dbReference type="PANTHER" id="PTHR11547:SF38">
    <property type="entry name" value="ARGININE KINASE 1-RELATED"/>
    <property type="match status" value="1"/>
</dbReference>
<dbReference type="PANTHER" id="PTHR11547">
    <property type="entry name" value="ARGININE OR CREATINE KINASE"/>
    <property type="match status" value="1"/>
</dbReference>
<dbReference type="Pfam" id="PF00217">
    <property type="entry name" value="ATP-gua_Ptrans"/>
    <property type="match status" value="1"/>
</dbReference>
<dbReference type="Pfam" id="PF02807">
    <property type="entry name" value="ATP-gua_PtransN"/>
    <property type="match status" value="1"/>
</dbReference>
<dbReference type="SUPFAM" id="SSF55931">
    <property type="entry name" value="Glutamine synthetase/guanido kinase"/>
    <property type="match status" value="1"/>
</dbReference>
<dbReference type="SUPFAM" id="SSF48034">
    <property type="entry name" value="Guanido kinase N-terminal domain"/>
    <property type="match status" value="1"/>
</dbReference>
<dbReference type="PROSITE" id="PS00112">
    <property type="entry name" value="PHOSPHAGEN_KINASE"/>
    <property type="match status" value="1"/>
</dbReference>
<dbReference type="PROSITE" id="PS51510">
    <property type="entry name" value="PHOSPHAGEN_KINASE_C"/>
    <property type="match status" value="1"/>
</dbReference>
<dbReference type="PROSITE" id="PS51509">
    <property type="entry name" value="PHOSPHAGEN_KINASE_N"/>
    <property type="match status" value="1"/>
</dbReference>
<proteinExistence type="evidence at transcript level"/>
<evidence type="ECO:0000250" key="1"/>
<evidence type="ECO:0000250" key="2">
    <source>
        <dbReference type="UniProtKB" id="Q004B5"/>
    </source>
</evidence>
<evidence type="ECO:0000255" key="3">
    <source>
        <dbReference type="PROSITE-ProRule" id="PRU00842"/>
    </source>
</evidence>
<evidence type="ECO:0000255" key="4">
    <source>
        <dbReference type="PROSITE-ProRule" id="PRU00843"/>
    </source>
</evidence>
<protein>
    <recommendedName>
        <fullName>Arginine kinase</fullName>
        <shortName>AK</shortName>
        <ecNumber>2.7.3.3</ecNumber>
    </recommendedName>
</protein>
<sequence length="357" mass="40243">MADAATISKLEEGFKKLQGATDCKSLLKKYLTKDVFDQLKAKKTSLGATLLDVIQSGVENLDSGVGVYAPDAEAYTLFAPLFDPIIEDYHKGFKQTDKHPNKDFGDVNQFVNVDPDGKFVISTRVRCGRSMEGYPFNPCLTEAQYKEMEAKVFSTLSSLEGELKGSFYPLTGMAKDVQQKLIDDHFLFKEGDRFLQAANACRYWPSGRGIYHNDNKTFLVWCNEEDHLRIISMQMGGDLGQVYRRLVSAVNEIEKRVPFSHHDRLGFLTFCPTNLGTTVRASVHIKLPKLAANREKLEEVAGKYSLQVRGTRGEHTEAEGGIYDISNKRRMGLTEFQAVKEMQDGILELIKIEKEMQ</sequence>
<keyword id="KW-0007">Acetylation</keyword>
<keyword id="KW-0067">ATP-binding</keyword>
<keyword id="KW-0418">Kinase</keyword>
<keyword id="KW-0547">Nucleotide-binding</keyword>
<keyword id="KW-0808">Transferase</keyword>
<feature type="initiator methionine" description="Removed" evidence="1">
    <location>
        <position position="1"/>
    </location>
</feature>
<feature type="chain" id="PRO_0000212003" description="Arginine kinase">
    <location>
        <begin position="2"/>
        <end position="357"/>
    </location>
</feature>
<feature type="domain" description="Phosphagen kinase N-terminal" evidence="3">
    <location>
        <begin position="9"/>
        <end position="91"/>
    </location>
</feature>
<feature type="domain" description="Phosphagen kinase C-terminal" evidence="4">
    <location>
        <begin position="119"/>
        <end position="356"/>
    </location>
</feature>
<feature type="binding site" evidence="2">
    <location>
        <begin position="64"/>
        <end position="68"/>
    </location>
    <ligand>
        <name>L-arginine</name>
        <dbReference type="ChEBI" id="CHEBI:32682"/>
    </ligand>
</feature>
<feature type="binding site" evidence="4">
    <location>
        <begin position="122"/>
        <end position="126"/>
    </location>
    <ligand>
        <name>ATP</name>
        <dbReference type="ChEBI" id="CHEBI:30616"/>
    </ligand>
</feature>
<feature type="binding site" evidence="4">
    <location>
        <position position="185"/>
    </location>
    <ligand>
        <name>ATP</name>
        <dbReference type="ChEBI" id="CHEBI:30616"/>
    </ligand>
</feature>
<feature type="binding site" evidence="2">
    <location>
        <position position="225"/>
    </location>
    <ligand>
        <name>L-arginine</name>
        <dbReference type="ChEBI" id="CHEBI:32682"/>
    </ligand>
</feature>
<feature type="binding site" evidence="4">
    <location>
        <position position="229"/>
    </location>
    <ligand>
        <name>ATP</name>
        <dbReference type="ChEBI" id="CHEBI:30616"/>
    </ligand>
</feature>
<feature type="binding site" evidence="2">
    <location>
        <position position="271"/>
    </location>
    <ligand>
        <name>L-arginine</name>
        <dbReference type="ChEBI" id="CHEBI:32682"/>
    </ligand>
</feature>
<feature type="binding site" evidence="4">
    <location>
        <begin position="280"/>
        <end position="284"/>
    </location>
    <ligand>
        <name>ATP</name>
        <dbReference type="ChEBI" id="CHEBI:30616"/>
    </ligand>
</feature>
<feature type="binding site" evidence="4">
    <location>
        <begin position="309"/>
        <end position="314"/>
    </location>
    <ligand>
        <name>ATP</name>
        <dbReference type="ChEBI" id="CHEBI:30616"/>
    </ligand>
</feature>
<feature type="binding site" evidence="2">
    <location>
        <position position="314"/>
    </location>
    <ligand>
        <name>L-arginine</name>
        <dbReference type="ChEBI" id="CHEBI:32682"/>
    </ligand>
</feature>
<feature type="modified residue" description="N-acetylalanine" evidence="1">
    <location>
        <position position="2"/>
    </location>
</feature>